<evidence type="ECO:0000250" key="1"/>
<evidence type="ECO:0000255" key="2"/>
<evidence type="ECO:0000256" key="3">
    <source>
        <dbReference type="SAM" id="MobiDB-lite"/>
    </source>
</evidence>
<evidence type="ECO:0000305" key="4"/>
<dbReference type="EMBL" id="AE017345">
    <property type="protein sequence ID" value="AAW43664.2"/>
    <property type="molecule type" value="Genomic_DNA"/>
</dbReference>
<dbReference type="RefSeq" id="XP_570971.1">
    <property type="nucleotide sequence ID" value="XM_570971.1"/>
</dbReference>
<dbReference type="SMR" id="P0CP16"/>
<dbReference type="FunCoup" id="P0CP16">
    <property type="interactions" value="196"/>
</dbReference>
<dbReference type="STRING" id="214684.P0CP16"/>
<dbReference type="PaxDb" id="214684-P0CP16"/>
<dbReference type="eggNOG" id="KOG0995">
    <property type="taxonomic scope" value="Eukaryota"/>
</dbReference>
<dbReference type="HOGENOM" id="CLU_012583_1_1_1"/>
<dbReference type="InParanoid" id="P0CP16"/>
<dbReference type="Proteomes" id="UP000002149">
    <property type="component" value="Chromosome 5"/>
</dbReference>
<dbReference type="GO" id="GO:0031262">
    <property type="term" value="C:Ndc80 complex"/>
    <property type="evidence" value="ECO:0000250"/>
    <property type="project" value="UniProtKB"/>
</dbReference>
<dbReference type="GO" id="GO:0005634">
    <property type="term" value="C:nucleus"/>
    <property type="evidence" value="ECO:0007669"/>
    <property type="project" value="UniProtKB-SubCell"/>
</dbReference>
<dbReference type="GO" id="GO:0008017">
    <property type="term" value="F:microtubule binding"/>
    <property type="evidence" value="ECO:0000250"/>
    <property type="project" value="UniProtKB"/>
</dbReference>
<dbReference type="GO" id="GO:0051315">
    <property type="term" value="P:attachment of mitotic spindle microtubules to kinetochore"/>
    <property type="evidence" value="ECO:0000318"/>
    <property type="project" value="GO_Central"/>
</dbReference>
<dbReference type="GO" id="GO:0051301">
    <property type="term" value="P:cell division"/>
    <property type="evidence" value="ECO:0007669"/>
    <property type="project" value="UniProtKB-KW"/>
</dbReference>
<dbReference type="GO" id="GO:1990758">
    <property type="term" value="P:mitotic sister chromatid biorientation"/>
    <property type="evidence" value="ECO:0000250"/>
    <property type="project" value="UniProtKB"/>
</dbReference>
<dbReference type="FunFam" id="1.10.418.30:FF:000002">
    <property type="entry name" value="NDC80, kinetochore complex component"/>
    <property type="match status" value="1"/>
</dbReference>
<dbReference type="Gene3D" id="1.10.418.30">
    <property type="entry name" value="Ncd80 complex, Ncd80 subunit"/>
    <property type="match status" value="1"/>
</dbReference>
<dbReference type="InterPro" id="IPR005550">
    <property type="entry name" value="Kinetochore_Ndc80"/>
</dbReference>
<dbReference type="InterPro" id="IPR055260">
    <property type="entry name" value="Ndc80_CH"/>
</dbReference>
<dbReference type="InterPro" id="IPR038273">
    <property type="entry name" value="Ndc80_sf"/>
</dbReference>
<dbReference type="PANTHER" id="PTHR10643">
    <property type="entry name" value="KINETOCHORE PROTEIN NDC80"/>
    <property type="match status" value="1"/>
</dbReference>
<dbReference type="PANTHER" id="PTHR10643:SF2">
    <property type="entry name" value="KINETOCHORE PROTEIN NDC80 HOMOLOG"/>
    <property type="match status" value="1"/>
</dbReference>
<dbReference type="Pfam" id="PF03801">
    <property type="entry name" value="Ndc80_HEC"/>
    <property type="match status" value="1"/>
</dbReference>
<organism>
    <name type="scientific">Cryptococcus neoformans var. neoformans serotype D (strain JEC21 / ATCC MYA-565)</name>
    <name type="common">Filobasidiella neoformans</name>
    <dbReference type="NCBI Taxonomy" id="214684"/>
    <lineage>
        <taxon>Eukaryota</taxon>
        <taxon>Fungi</taxon>
        <taxon>Dikarya</taxon>
        <taxon>Basidiomycota</taxon>
        <taxon>Agaricomycotina</taxon>
        <taxon>Tremellomycetes</taxon>
        <taxon>Tremellales</taxon>
        <taxon>Cryptococcaceae</taxon>
        <taxon>Cryptococcus</taxon>
        <taxon>Cryptococcus neoformans species complex</taxon>
    </lineage>
</organism>
<reference key="1">
    <citation type="journal article" date="2005" name="Science">
        <title>The genome of the basidiomycetous yeast and human pathogen Cryptococcus neoformans.</title>
        <authorList>
            <person name="Loftus B.J."/>
            <person name="Fung E."/>
            <person name="Roncaglia P."/>
            <person name="Rowley D."/>
            <person name="Amedeo P."/>
            <person name="Bruno D."/>
            <person name="Vamathevan J."/>
            <person name="Miranda M."/>
            <person name="Anderson I.J."/>
            <person name="Fraser J.A."/>
            <person name="Allen J.E."/>
            <person name="Bosdet I.E."/>
            <person name="Brent M.R."/>
            <person name="Chiu R."/>
            <person name="Doering T.L."/>
            <person name="Donlin M.J."/>
            <person name="D'Souza C.A."/>
            <person name="Fox D.S."/>
            <person name="Grinberg V."/>
            <person name="Fu J."/>
            <person name="Fukushima M."/>
            <person name="Haas B.J."/>
            <person name="Huang J.C."/>
            <person name="Janbon G."/>
            <person name="Jones S.J.M."/>
            <person name="Koo H.L."/>
            <person name="Krzywinski M.I."/>
            <person name="Kwon-Chung K.J."/>
            <person name="Lengeler K.B."/>
            <person name="Maiti R."/>
            <person name="Marra M.A."/>
            <person name="Marra R.E."/>
            <person name="Mathewson C.A."/>
            <person name="Mitchell T.G."/>
            <person name="Pertea M."/>
            <person name="Riggs F.R."/>
            <person name="Salzberg S.L."/>
            <person name="Schein J.E."/>
            <person name="Shvartsbeyn A."/>
            <person name="Shin H."/>
            <person name="Shumway M."/>
            <person name="Specht C.A."/>
            <person name="Suh B.B."/>
            <person name="Tenney A."/>
            <person name="Utterback T.R."/>
            <person name="Wickes B.L."/>
            <person name="Wortman J.R."/>
            <person name="Wye N.H."/>
            <person name="Kronstad J.W."/>
            <person name="Lodge J.K."/>
            <person name="Heitman J."/>
            <person name="Davis R.W."/>
            <person name="Fraser C.M."/>
            <person name="Hyman R.W."/>
        </authorList>
    </citation>
    <scope>NUCLEOTIDE SEQUENCE [LARGE SCALE GENOMIC DNA]</scope>
    <source>
        <strain>JEC21 / ATCC MYA-565</strain>
    </source>
</reference>
<proteinExistence type="inferred from homology"/>
<feature type="chain" id="PRO_0000246636" description="Probable kinetochore protein NDC80">
    <location>
        <begin position="1"/>
        <end position="671"/>
    </location>
</feature>
<feature type="region of interest" description="Disordered" evidence="3">
    <location>
        <begin position="1"/>
        <end position="132"/>
    </location>
</feature>
<feature type="coiled-coil region" evidence="2">
    <location>
        <begin position="293"/>
        <end position="343"/>
    </location>
</feature>
<feature type="coiled-coil region" evidence="2">
    <location>
        <begin position="375"/>
        <end position="447"/>
    </location>
</feature>
<feature type="coiled-coil region" evidence="2">
    <location>
        <begin position="541"/>
        <end position="584"/>
    </location>
</feature>
<feature type="compositionally biased region" description="Low complexity" evidence="3">
    <location>
        <begin position="9"/>
        <end position="24"/>
    </location>
</feature>
<feature type="compositionally biased region" description="Polar residues" evidence="3">
    <location>
        <begin position="39"/>
        <end position="60"/>
    </location>
</feature>
<feature type="compositionally biased region" description="Polar residues" evidence="3">
    <location>
        <begin position="108"/>
        <end position="121"/>
    </location>
</feature>
<accession>P0CP16</accession>
<accession>Q55SB3</accession>
<accession>Q5KGR0</accession>
<name>NDC80_CRYNJ</name>
<comment type="function">
    <text evidence="1">Acts as a component of the essential kinetochore-associated NDC80 complex, which is required for chromosome segregation and spindle checkpoint activity.</text>
</comment>
<comment type="subunit">
    <text evidence="1">Component of the NDC80 complex, which consists of at least NDC80, NUF2 and SPC25.</text>
</comment>
<comment type="subcellular location">
    <subcellularLocation>
        <location evidence="1">Nucleus</location>
    </subcellularLocation>
    <subcellularLocation>
        <location evidence="1">Chromosome</location>
        <location evidence="1">Centromere</location>
        <location evidence="1">Kinetochore</location>
    </subcellularLocation>
    <text evidence="1">Associated with kinetochores.</text>
</comment>
<comment type="similarity">
    <text evidence="4">Belongs to the NDC80/HEC1 family.</text>
</comment>
<gene>
    <name type="primary">NDC80</name>
    <name type="ordered locus">CNE02670</name>
</gene>
<sequence>MDFRRQTLVSNGGSSQPQPSVPSSAIKKASRLGPARQSLAPSQIQSRTSILGVSNSQENASHGMMGSRKSTVPGKMGDRDQLMSASRGDGGIYGRTPQMNRGIPGSVRRSSVFTSNSQGRTSMAPGVYSTAYKDPRPLRDKVFQSNCMRNVNEYLISVRYPLPLTAKTLTSPTAKEFQSIFKFLVNDLVDPGAAWGKKFEDDTLSILKDLKYPGMDSVSKTALTAPGAPQSWPNMLAMLNWLVDLCKALDNWDDPEIISDPLMVPATELPLDYPNLDDRLLWDFAAKTYSQWFDGEAEEFDEAEQELEHAYDRMASATVAECEKLEREIQKRNVEIQQLHVQEPPLKKLEDEYVQLMSDKNKFISFLDQQGQKIEKIRLRISKVKEAVISQEAELEARQSELAHIEQAVAAQNLSPDEVQRMNHERDSLTRSLEDLRNKISEASQFAYDQEMVVTKSMDRFEGLLTDYNSLAHQIGLLDSSLDVPSLAANVNYNLDVDLGAEELEEVKAVGVRMRSTIWQALQTCRETFRQEALGLGNGTIALEDEFDKLGQSVERQKEEVGNLEVRLKIVHNQAEDAQSQIASENSDTNKIITQLETEVTNMLAASQQGVLSTQSQLESTRIAFKELRHKTALFQDSVVAEVGEHIDAIIKAKEHTANSLKSIRALAETQ</sequence>
<protein>
    <recommendedName>
        <fullName>Probable kinetochore protein NDC80</fullName>
    </recommendedName>
</protein>
<keyword id="KW-0131">Cell cycle</keyword>
<keyword id="KW-0132">Cell division</keyword>
<keyword id="KW-0137">Centromere</keyword>
<keyword id="KW-0158">Chromosome</keyword>
<keyword id="KW-0175">Coiled coil</keyword>
<keyword id="KW-0995">Kinetochore</keyword>
<keyword id="KW-0498">Mitosis</keyword>
<keyword id="KW-0539">Nucleus</keyword>
<keyword id="KW-1185">Reference proteome</keyword>